<protein>
    <recommendedName>
        <fullName evidence="1">DNA-binding protein Fis</fullName>
    </recommendedName>
</protein>
<feature type="chain" id="PRO_1000023337" description="DNA-binding protein Fis">
    <location>
        <begin position="1"/>
        <end position="101"/>
    </location>
</feature>
<feature type="DNA-binding region" description="H-T-H motif" evidence="1">
    <location>
        <begin position="77"/>
        <end position="96"/>
    </location>
</feature>
<accession>Q12S40</accession>
<gene>
    <name evidence="1" type="primary">fis</name>
    <name type="ordered locus">Sden_0444</name>
</gene>
<organism>
    <name type="scientific">Shewanella denitrificans (strain OS217 / ATCC BAA-1090 / DSM 15013)</name>
    <dbReference type="NCBI Taxonomy" id="318161"/>
    <lineage>
        <taxon>Bacteria</taxon>
        <taxon>Pseudomonadati</taxon>
        <taxon>Pseudomonadota</taxon>
        <taxon>Gammaproteobacteria</taxon>
        <taxon>Alteromonadales</taxon>
        <taxon>Shewanellaceae</taxon>
        <taxon>Shewanella</taxon>
    </lineage>
</organism>
<proteinExistence type="inferred from homology"/>
<reference key="1">
    <citation type="submission" date="2006-03" db="EMBL/GenBank/DDBJ databases">
        <title>Complete sequence of Shewanella denitrificans OS217.</title>
        <authorList>
            <consortium name="US DOE Joint Genome Institute"/>
            <person name="Copeland A."/>
            <person name="Lucas S."/>
            <person name="Lapidus A."/>
            <person name="Barry K."/>
            <person name="Detter J.C."/>
            <person name="Glavina del Rio T."/>
            <person name="Hammon N."/>
            <person name="Israni S."/>
            <person name="Dalin E."/>
            <person name="Tice H."/>
            <person name="Pitluck S."/>
            <person name="Brettin T."/>
            <person name="Bruce D."/>
            <person name="Han C."/>
            <person name="Tapia R."/>
            <person name="Gilna P."/>
            <person name="Kiss H."/>
            <person name="Schmutz J."/>
            <person name="Larimer F."/>
            <person name="Land M."/>
            <person name="Hauser L."/>
            <person name="Kyrpides N."/>
            <person name="Lykidis A."/>
            <person name="Richardson P."/>
        </authorList>
    </citation>
    <scope>NUCLEOTIDE SEQUENCE [LARGE SCALE GENOMIC DNA]</scope>
    <source>
        <strain>OS217 / ATCC BAA-1090 / DSM 15013</strain>
    </source>
</reference>
<evidence type="ECO:0000255" key="1">
    <source>
        <dbReference type="HAMAP-Rule" id="MF_00166"/>
    </source>
</evidence>
<name>FIS_SHEDO</name>
<sequence length="101" mass="11365">MFDQTTNTEVHQLTVGKIETANGTIKPQLLRDAVKRAVTNFFSQLDGQEASEVYEMVLSEVEAPLLDIIMQHTRGNQTRAANMLGINRGTLRKKLKKYGMN</sequence>
<keyword id="KW-0010">Activator</keyword>
<keyword id="KW-0238">DNA-binding</keyword>
<keyword id="KW-1185">Reference proteome</keyword>
<keyword id="KW-0804">Transcription</keyword>
<keyword id="KW-0805">Transcription regulation</keyword>
<comment type="function">
    <text evidence="1">Activates ribosomal RNA transcription. Plays a direct role in upstream activation of rRNA promoters.</text>
</comment>
<comment type="subunit">
    <text evidence="1">Homodimer.</text>
</comment>
<comment type="similarity">
    <text evidence="1">Belongs to the transcriptional regulatory Fis family.</text>
</comment>
<dbReference type="EMBL" id="CP000302">
    <property type="protein sequence ID" value="ABE53736.1"/>
    <property type="molecule type" value="Genomic_DNA"/>
</dbReference>
<dbReference type="RefSeq" id="WP_011494902.1">
    <property type="nucleotide sequence ID" value="NC_007954.1"/>
</dbReference>
<dbReference type="SMR" id="Q12S40"/>
<dbReference type="STRING" id="318161.Sden_0444"/>
<dbReference type="KEGG" id="sdn:Sden_0444"/>
<dbReference type="eggNOG" id="COG2901">
    <property type="taxonomic scope" value="Bacteria"/>
</dbReference>
<dbReference type="HOGENOM" id="CLU_158040_3_3_6"/>
<dbReference type="OrthoDB" id="9802388at2"/>
<dbReference type="Proteomes" id="UP000001982">
    <property type="component" value="Chromosome"/>
</dbReference>
<dbReference type="GO" id="GO:0003700">
    <property type="term" value="F:DNA-binding transcription factor activity"/>
    <property type="evidence" value="ECO:0007669"/>
    <property type="project" value="UniProtKB-UniRule"/>
</dbReference>
<dbReference type="GO" id="GO:0043565">
    <property type="term" value="F:sequence-specific DNA binding"/>
    <property type="evidence" value="ECO:0007669"/>
    <property type="project" value="InterPro"/>
</dbReference>
<dbReference type="FunFam" id="1.10.10.60:FF:000006">
    <property type="entry name" value="DNA-binding protein Fis"/>
    <property type="match status" value="1"/>
</dbReference>
<dbReference type="Gene3D" id="1.10.10.60">
    <property type="entry name" value="Homeodomain-like"/>
    <property type="match status" value="1"/>
</dbReference>
<dbReference type="HAMAP" id="MF_00166">
    <property type="entry name" value="DNA_binding_Fis"/>
    <property type="match status" value="1"/>
</dbReference>
<dbReference type="InterPro" id="IPR005412">
    <property type="entry name" value="Fis_DNA-bd"/>
</dbReference>
<dbReference type="InterPro" id="IPR009057">
    <property type="entry name" value="Homeodomain-like_sf"/>
</dbReference>
<dbReference type="InterPro" id="IPR002197">
    <property type="entry name" value="HTH_Fis"/>
</dbReference>
<dbReference type="InterPro" id="IPR050207">
    <property type="entry name" value="Trans_regulatory_Fis"/>
</dbReference>
<dbReference type="NCBIfam" id="NF001659">
    <property type="entry name" value="PRK00430.1"/>
    <property type="match status" value="1"/>
</dbReference>
<dbReference type="PANTHER" id="PTHR47918">
    <property type="entry name" value="DNA-BINDING PROTEIN FIS"/>
    <property type="match status" value="1"/>
</dbReference>
<dbReference type="PANTHER" id="PTHR47918:SF1">
    <property type="entry name" value="DNA-BINDING PROTEIN FIS"/>
    <property type="match status" value="1"/>
</dbReference>
<dbReference type="Pfam" id="PF02954">
    <property type="entry name" value="HTH_8"/>
    <property type="match status" value="1"/>
</dbReference>
<dbReference type="PIRSF" id="PIRSF002097">
    <property type="entry name" value="DNA-binding_Fis"/>
    <property type="match status" value="1"/>
</dbReference>
<dbReference type="PRINTS" id="PR01591">
    <property type="entry name" value="DNABINDNGFIS"/>
</dbReference>
<dbReference type="PRINTS" id="PR01590">
    <property type="entry name" value="HTHFIS"/>
</dbReference>
<dbReference type="SUPFAM" id="SSF46689">
    <property type="entry name" value="Homeodomain-like"/>
    <property type="match status" value="1"/>
</dbReference>